<gene>
    <name type="ordered locus">At1g69990</name>
    <name type="ORF">F20P5.27</name>
</gene>
<keyword id="KW-0067">ATP-binding</keyword>
<keyword id="KW-0325">Glycoprotein</keyword>
<keyword id="KW-0418">Kinase</keyword>
<keyword id="KW-0433">Leucine-rich repeat</keyword>
<keyword id="KW-0472">Membrane</keyword>
<keyword id="KW-0547">Nucleotide-binding</keyword>
<keyword id="KW-0597">Phosphoprotein</keyword>
<keyword id="KW-0675">Receptor</keyword>
<keyword id="KW-1185">Reference proteome</keyword>
<keyword id="KW-0677">Repeat</keyword>
<keyword id="KW-0723">Serine/threonine-protein kinase</keyword>
<keyword id="KW-0732">Signal</keyword>
<keyword id="KW-0808">Transferase</keyword>
<keyword id="KW-0812">Transmembrane</keyword>
<keyword id="KW-1133">Transmembrane helix</keyword>
<sequence>MKTISIFFVIILMSSSHAEDDVLCLKGFKSSLKDPSNQLNTWSFPNSSSSICKLTGVSCWNAKENRILSLQLQSMQLSGQIPESLKLCRSLQSLDLSFNDFSGLIPSQICSWLPYLVTLDLSGNKLSGSIPSQIVDCKFLNSLALNQNKLTGSIPSELTRLNRLQRLSLADNDLSGSIPSELSHYGEDGFRGNGGLCGKPLSNCGSFNGKNLTIIVTAGVIGAVGSLCVGFGMFWWFFIRDRRKMNNYGYGAGKCKDDSDWIGLLRSHKLVQVTLFQKPIVKIKLVDLIEATNGFDSGNIVVSSRSGVSYKADLPDGSTLEVKRLSSCCELSEKQFRSEINKLGQIRHPNLVPLLGFCVVEDEILLVYKHMANGTLYSQLQQWDIDWPTRVRVAVGAARGLAWLHHGCQPLYMHQYISSNVILLDEDFDARVIDYGLGKLVSSQDSKDSSFSNGKFGYVAPEYSSTMVASLSGDVYGFGIVLLEIVTGQKPVLINNGEEGFKESLVEWVSKHLSNGRSKDAIDRRIFGKGYDDEIMQVLRIACSCVVSRPKERPLMIQVYESLKNLGDQHGFFSEYSDEFPLIFNKQEHLK</sequence>
<organism>
    <name type="scientific">Arabidopsis thaliana</name>
    <name type="common">Mouse-ear cress</name>
    <dbReference type="NCBI Taxonomy" id="3702"/>
    <lineage>
        <taxon>Eukaryota</taxon>
        <taxon>Viridiplantae</taxon>
        <taxon>Streptophyta</taxon>
        <taxon>Embryophyta</taxon>
        <taxon>Tracheophyta</taxon>
        <taxon>Spermatophyta</taxon>
        <taxon>Magnoliopsida</taxon>
        <taxon>eudicotyledons</taxon>
        <taxon>Gunneridae</taxon>
        <taxon>Pentapetalae</taxon>
        <taxon>rosids</taxon>
        <taxon>malvids</taxon>
        <taxon>Brassicales</taxon>
        <taxon>Brassicaceae</taxon>
        <taxon>Camelineae</taxon>
        <taxon>Arabidopsis</taxon>
    </lineage>
</organism>
<name>Y1699_ARATH</name>
<protein>
    <recommendedName>
        <fullName>Probable LRR receptor-like serine/threonine-protein kinase At1g69990</fullName>
        <ecNumber>2.7.11.1</ecNumber>
    </recommendedName>
</protein>
<feature type="signal peptide" evidence="3">
    <location>
        <begin position="1"/>
        <end position="18"/>
    </location>
</feature>
<feature type="chain" id="PRO_0000387541" description="Probable LRR receptor-like serine/threonine-protein kinase At1g69990">
    <location>
        <begin position="19"/>
        <end position="591"/>
    </location>
</feature>
<feature type="topological domain" description="Extracellular" evidence="3">
    <location>
        <begin position="19"/>
        <end position="218"/>
    </location>
</feature>
<feature type="transmembrane region" description="Helical" evidence="3">
    <location>
        <begin position="219"/>
        <end position="239"/>
    </location>
</feature>
<feature type="topological domain" description="Cytoplasmic" evidence="3">
    <location>
        <begin position="240"/>
        <end position="591"/>
    </location>
</feature>
<feature type="repeat" description="LRR 1">
    <location>
        <begin position="66"/>
        <end position="88"/>
    </location>
</feature>
<feature type="repeat" description="LRR 2">
    <location>
        <begin position="90"/>
        <end position="111"/>
    </location>
</feature>
<feature type="repeat" description="LRR 3">
    <location>
        <begin position="115"/>
        <end position="137"/>
    </location>
</feature>
<feature type="repeat" description="LRR 4">
    <location>
        <begin position="139"/>
        <end position="162"/>
    </location>
</feature>
<feature type="repeat" description="LRR 5">
    <location>
        <begin position="163"/>
        <end position="185"/>
    </location>
</feature>
<feature type="domain" description="Protein kinase" evidence="4">
    <location>
        <begin position="295"/>
        <end position="573"/>
    </location>
</feature>
<feature type="binding site" evidence="4">
    <location>
        <begin position="301"/>
        <end position="309"/>
    </location>
    <ligand>
        <name>ATP</name>
        <dbReference type="ChEBI" id="CHEBI:30616"/>
    </ligand>
</feature>
<feature type="binding site" evidence="4">
    <location>
        <position position="323"/>
    </location>
    <ligand>
        <name>ATP</name>
        <dbReference type="ChEBI" id="CHEBI:30616"/>
    </ligand>
</feature>
<feature type="modified residue" description="Phosphothreonine" evidence="2">
    <location>
        <position position="292"/>
    </location>
</feature>
<feature type="modified residue" description="Phosphoserine" evidence="2">
    <location>
        <position position="378"/>
    </location>
</feature>
<feature type="modified residue" description="Phosphothreonine" evidence="1">
    <location>
        <position position="389"/>
    </location>
</feature>
<feature type="modified residue" description="Phosphotyrosine" evidence="1">
    <location>
        <position position="463"/>
    </location>
</feature>
<feature type="modified residue" description="Phosphoserine" evidence="1">
    <location>
        <position position="465"/>
    </location>
</feature>
<feature type="modified residue" description="Phosphothreonine" evidence="1">
    <location>
        <position position="466"/>
    </location>
</feature>
<feature type="modified residue" description="Phosphoserine" evidence="1">
    <location>
        <position position="470"/>
    </location>
</feature>
<feature type="glycosylation site" description="N-linked (GlcNAc...) asparagine" evidence="3">
    <location>
        <position position="46"/>
    </location>
</feature>
<feature type="glycosylation site" description="N-linked (GlcNAc...) asparagine" evidence="3">
    <location>
        <position position="211"/>
    </location>
</feature>
<comment type="catalytic activity">
    <reaction>
        <text>L-seryl-[protein] + ATP = O-phospho-L-seryl-[protein] + ADP + H(+)</text>
        <dbReference type="Rhea" id="RHEA:17989"/>
        <dbReference type="Rhea" id="RHEA-COMP:9863"/>
        <dbReference type="Rhea" id="RHEA-COMP:11604"/>
        <dbReference type="ChEBI" id="CHEBI:15378"/>
        <dbReference type="ChEBI" id="CHEBI:29999"/>
        <dbReference type="ChEBI" id="CHEBI:30616"/>
        <dbReference type="ChEBI" id="CHEBI:83421"/>
        <dbReference type="ChEBI" id="CHEBI:456216"/>
        <dbReference type="EC" id="2.7.11.1"/>
    </reaction>
</comment>
<comment type="catalytic activity">
    <reaction>
        <text>L-threonyl-[protein] + ATP = O-phospho-L-threonyl-[protein] + ADP + H(+)</text>
        <dbReference type="Rhea" id="RHEA:46608"/>
        <dbReference type="Rhea" id="RHEA-COMP:11060"/>
        <dbReference type="Rhea" id="RHEA-COMP:11605"/>
        <dbReference type="ChEBI" id="CHEBI:15378"/>
        <dbReference type="ChEBI" id="CHEBI:30013"/>
        <dbReference type="ChEBI" id="CHEBI:30616"/>
        <dbReference type="ChEBI" id="CHEBI:61977"/>
        <dbReference type="ChEBI" id="CHEBI:456216"/>
        <dbReference type="EC" id="2.7.11.1"/>
    </reaction>
</comment>
<comment type="interaction">
    <interactant intactId="EBI-20651225">
        <id>C0LGI5</id>
    </interactant>
    <interactant intactId="EBI-16902423">
        <id>C0LGD9</id>
        <label>At1g07560</label>
    </interactant>
    <organismsDiffer>false</organismsDiffer>
    <experiments>2</experiments>
</comment>
<comment type="interaction">
    <interactant intactId="EBI-20651225">
        <id>C0LGI5</id>
    </interactant>
    <interactant intactId="EBI-20651225">
        <id>C0LGI5</id>
        <label>At1g69990</label>
    </interactant>
    <organismsDiffer>false</organismsDiffer>
    <experiments>2</experiments>
</comment>
<comment type="interaction">
    <interactant intactId="EBI-20651225">
        <id>C0LGI5</id>
    </interactant>
    <interactant intactId="EBI-20651957">
        <id>Q9ZQR3</id>
        <label>At2g14510</label>
    </interactant>
    <organismsDiffer>false</organismsDiffer>
    <experiments>2</experiments>
</comment>
<comment type="interaction">
    <interactant intactId="EBI-20651225">
        <id>C0LGI5</id>
    </interactant>
    <interactant intactId="EBI-16902452">
        <id>Q8VYT3</id>
        <label>At4g30520</label>
    </interactant>
    <organismsDiffer>false</organismsDiffer>
    <experiments>2</experiments>
</comment>
<comment type="interaction">
    <interactant intactId="EBI-20651225">
        <id>C0LGI5</id>
    </interactant>
    <interactant intactId="EBI-617138">
        <id>Q94F62</id>
        <label>BAK1</label>
    </interactant>
    <organismsDiffer>false</organismsDiffer>
    <experiments>4</experiments>
</comment>
<comment type="interaction">
    <interactant intactId="EBI-20651225">
        <id>C0LGI5</id>
    </interactant>
    <interactant intactId="EBI-16895926">
        <id>Q6XAT2</id>
        <label>ERL2</label>
    </interactant>
    <organismsDiffer>false</organismsDiffer>
    <experiments>3</experiments>
</comment>
<comment type="interaction">
    <interactant intactId="EBI-20651225">
        <id>C0LGI5</id>
    </interactant>
    <interactant intactId="EBI-16924837">
        <id>Q9C8I6</id>
        <label>IOS1</label>
    </interactant>
    <organismsDiffer>false</organismsDiffer>
    <experiments>4</experiments>
</comment>
<comment type="interaction">
    <interactant intactId="EBI-20651225">
        <id>C0LGI5</id>
    </interactant>
    <interactant intactId="EBI-20651739">
        <id>Q9ZVD4</id>
        <label>LRR-RLK</label>
    </interactant>
    <organismsDiffer>false</organismsDiffer>
    <experiments>2</experiments>
</comment>
<comment type="interaction">
    <interactant intactId="EBI-20651225">
        <id>C0LGI5</id>
    </interactant>
    <interactant intactId="EBI-16146189">
        <id>Q9LFS4</id>
        <label>NIK1</label>
    </interactant>
    <organismsDiffer>false</organismsDiffer>
    <experiments>2</experiments>
</comment>
<comment type="interaction">
    <interactant intactId="EBI-20651225">
        <id>C0LGI5</id>
    </interactant>
    <interactant intactId="EBI-20659695">
        <id>C0LGR3</id>
        <label>RGI3</label>
    </interactant>
    <organismsDiffer>false</organismsDiffer>
    <experiments>3</experiments>
</comment>
<comment type="interaction">
    <interactant intactId="EBI-20651225">
        <id>C0LGI5</id>
    </interactant>
    <interactant intactId="EBI-1238953">
        <id>Q9ZRF9</id>
        <label>RPK1</label>
    </interactant>
    <organismsDiffer>false</organismsDiffer>
    <experiments>3</experiments>
</comment>
<comment type="interaction">
    <interactant intactId="EBI-20651225">
        <id>C0LGI5</id>
    </interactant>
    <interactant intactId="EBI-6290483">
        <id>Q9SKG5</id>
        <label>SERK4</label>
    </interactant>
    <organismsDiffer>false</organismsDiffer>
    <experiments>4</experiments>
</comment>
<comment type="interaction">
    <interactant intactId="EBI-20651225">
        <id>C0LGI5</id>
    </interactant>
    <interactant intactId="EBI-16887868">
        <id>Q8LPS5</id>
        <label>SERK5</label>
    </interactant>
    <organismsDiffer>false</organismsDiffer>
    <experiments>2</experiments>
</comment>
<comment type="interaction">
    <interactant intactId="EBI-20651225">
        <id>C0LGI5</id>
    </interactant>
    <interactant intactId="EBI-16954301">
        <id>Q9C8M9</id>
        <label>SRF6</label>
    </interactant>
    <organismsDiffer>false</organismsDiffer>
    <experiments>3</experiments>
</comment>
<comment type="interaction">
    <interactant intactId="EBI-20651225">
        <id>C0LGI5</id>
    </interactant>
    <interactant intactId="EBI-17072125">
        <id>Q8RWZ1</id>
        <label>SUB</label>
    </interactant>
    <organismsDiffer>false</organismsDiffer>
    <experiments>3</experiments>
</comment>
<comment type="subcellular location">
    <subcellularLocation>
        <location evidence="5">Membrane</location>
        <topology evidence="5">Single-pass type I membrane protein</topology>
    </subcellularLocation>
</comment>
<comment type="similarity">
    <text evidence="4">Belongs to the protein kinase superfamily. Ser/Thr protein kinase family.</text>
</comment>
<comment type="sequence caution" evidence="5">
    <conflict type="erroneous gene model prediction">
        <sequence resource="EMBL-CDS" id="AAB61113"/>
    </conflict>
</comment>
<proteinExistence type="evidence at protein level"/>
<evidence type="ECO:0000250" key="1">
    <source>
        <dbReference type="UniProtKB" id="Q94AG2"/>
    </source>
</evidence>
<evidence type="ECO:0000250" key="2">
    <source>
        <dbReference type="UniProtKB" id="Q9LSI9"/>
    </source>
</evidence>
<evidence type="ECO:0000255" key="3"/>
<evidence type="ECO:0000255" key="4">
    <source>
        <dbReference type="PROSITE-ProRule" id="PRU00159"/>
    </source>
</evidence>
<evidence type="ECO:0000305" key="5"/>
<reference key="1">
    <citation type="journal article" date="2000" name="Nature">
        <title>Sequence and analysis of chromosome 1 of the plant Arabidopsis thaliana.</title>
        <authorList>
            <person name="Theologis A."/>
            <person name="Ecker J.R."/>
            <person name="Palm C.J."/>
            <person name="Federspiel N.A."/>
            <person name="Kaul S."/>
            <person name="White O."/>
            <person name="Alonso J."/>
            <person name="Altafi H."/>
            <person name="Araujo R."/>
            <person name="Bowman C.L."/>
            <person name="Brooks S.Y."/>
            <person name="Buehler E."/>
            <person name="Chan A."/>
            <person name="Chao Q."/>
            <person name="Chen H."/>
            <person name="Cheuk R.F."/>
            <person name="Chin C.W."/>
            <person name="Chung M.K."/>
            <person name="Conn L."/>
            <person name="Conway A.B."/>
            <person name="Conway A.R."/>
            <person name="Creasy T.H."/>
            <person name="Dewar K."/>
            <person name="Dunn P."/>
            <person name="Etgu P."/>
            <person name="Feldblyum T.V."/>
            <person name="Feng J.-D."/>
            <person name="Fong B."/>
            <person name="Fujii C.Y."/>
            <person name="Gill J.E."/>
            <person name="Goldsmith A.D."/>
            <person name="Haas B."/>
            <person name="Hansen N.F."/>
            <person name="Hughes B."/>
            <person name="Huizar L."/>
            <person name="Hunter J.L."/>
            <person name="Jenkins J."/>
            <person name="Johnson-Hopson C."/>
            <person name="Khan S."/>
            <person name="Khaykin E."/>
            <person name="Kim C.J."/>
            <person name="Koo H.L."/>
            <person name="Kremenetskaia I."/>
            <person name="Kurtz D.B."/>
            <person name="Kwan A."/>
            <person name="Lam B."/>
            <person name="Langin-Hooper S."/>
            <person name="Lee A."/>
            <person name="Lee J.M."/>
            <person name="Lenz C.A."/>
            <person name="Li J.H."/>
            <person name="Li Y.-P."/>
            <person name="Lin X."/>
            <person name="Liu S.X."/>
            <person name="Liu Z.A."/>
            <person name="Luros J.S."/>
            <person name="Maiti R."/>
            <person name="Marziali A."/>
            <person name="Militscher J."/>
            <person name="Miranda M."/>
            <person name="Nguyen M."/>
            <person name="Nierman W.C."/>
            <person name="Osborne B.I."/>
            <person name="Pai G."/>
            <person name="Peterson J."/>
            <person name="Pham P.K."/>
            <person name="Rizzo M."/>
            <person name="Rooney T."/>
            <person name="Rowley D."/>
            <person name="Sakano H."/>
            <person name="Salzberg S.L."/>
            <person name="Schwartz J.R."/>
            <person name="Shinn P."/>
            <person name="Southwick A.M."/>
            <person name="Sun H."/>
            <person name="Tallon L.J."/>
            <person name="Tambunga G."/>
            <person name="Toriumi M.J."/>
            <person name="Town C.D."/>
            <person name="Utterback T."/>
            <person name="Van Aken S."/>
            <person name="Vaysberg M."/>
            <person name="Vysotskaia V.S."/>
            <person name="Walker M."/>
            <person name="Wu D."/>
            <person name="Yu G."/>
            <person name="Fraser C.M."/>
            <person name="Venter J.C."/>
            <person name="Davis R.W."/>
        </authorList>
    </citation>
    <scope>NUCLEOTIDE SEQUENCE [LARGE SCALE GENOMIC DNA]</scope>
    <source>
        <strain>cv. Columbia</strain>
    </source>
</reference>
<reference key="2">
    <citation type="journal article" date="2017" name="Plant J.">
        <title>Araport11: a complete reannotation of the Arabidopsis thaliana reference genome.</title>
        <authorList>
            <person name="Cheng C.Y."/>
            <person name="Krishnakumar V."/>
            <person name="Chan A.P."/>
            <person name="Thibaud-Nissen F."/>
            <person name="Schobel S."/>
            <person name="Town C.D."/>
        </authorList>
    </citation>
    <scope>GENOME REANNOTATION</scope>
    <source>
        <strain>cv. Columbia</strain>
    </source>
</reference>
<reference key="3">
    <citation type="journal article" date="2010" name="BMC Genomics">
        <title>Genome-wide cloning and sequence analysis of leucine-rich repeat receptor-like protein kinase genes in Arabidopsis thaliana.</title>
        <authorList>
            <person name="Gou X."/>
            <person name="He K."/>
            <person name="Yang H."/>
            <person name="Yuan T."/>
            <person name="Lin H."/>
            <person name="Clouse S.D."/>
            <person name="Li J."/>
        </authorList>
    </citation>
    <scope>NUCLEOTIDE SEQUENCE [LARGE SCALE MRNA]</scope>
    <source>
        <strain>cv. Columbia</strain>
    </source>
</reference>
<accession>C0LGI5</accession>
<accession>O04545</accession>
<dbReference type="EC" id="2.7.11.1"/>
<dbReference type="EMBL" id="AC002062">
    <property type="protein sequence ID" value="AAB61113.1"/>
    <property type="status" value="ALT_SEQ"/>
    <property type="molecule type" value="Genomic_DNA"/>
</dbReference>
<dbReference type="EMBL" id="CP002684">
    <property type="protein sequence ID" value="AEE35006.1"/>
    <property type="molecule type" value="Genomic_DNA"/>
</dbReference>
<dbReference type="EMBL" id="FJ708675">
    <property type="protein sequence ID" value="ACN59270.1"/>
    <property type="molecule type" value="mRNA"/>
</dbReference>
<dbReference type="PIR" id="E96722">
    <property type="entry name" value="E96722"/>
</dbReference>
<dbReference type="RefSeq" id="NP_177157.1">
    <property type="nucleotide sequence ID" value="NM_105668.1"/>
</dbReference>
<dbReference type="SMR" id="C0LGI5"/>
<dbReference type="BioGRID" id="28557">
    <property type="interactions" value="28"/>
</dbReference>
<dbReference type="IntAct" id="C0LGI5">
    <property type="interactions" value="42"/>
</dbReference>
<dbReference type="STRING" id="3702.C0LGI5"/>
<dbReference type="GlyGen" id="C0LGI5">
    <property type="glycosylation" value="2 sites"/>
</dbReference>
<dbReference type="PaxDb" id="3702-AT1G69990.1"/>
<dbReference type="EnsemblPlants" id="AT1G69990.1">
    <property type="protein sequence ID" value="AT1G69990.1"/>
    <property type="gene ID" value="AT1G69990"/>
</dbReference>
<dbReference type="GeneID" id="843336"/>
<dbReference type="Gramene" id="AT1G69990.1">
    <property type="protein sequence ID" value="AT1G69990.1"/>
    <property type="gene ID" value="AT1G69990"/>
</dbReference>
<dbReference type="KEGG" id="ath:AT1G69990"/>
<dbReference type="Araport" id="AT1G69990"/>
<dbReference type="TAIR" id="AT1G69990">
    <property type="gene designation" value="BIR4"/>
</dbReference>
<dbReference type="eggNOG" id="ENOG502QRP1">
    <property type="taxonomic scope" value="Eukaryota"/>
</dbReference>
<dbReference type="HOGENOM" id="CLU_000288_92_6_1"/>
<dbReference type="InParanoid" id="C0LGI5"/>
<dbReference type="OMA" id="GMFWWFF"/>
<dbReference type="PhylomeDB" id="C0LGI5"/>
<dbReference type="PRO" id="PR:C0LGI5"/>
<dbReference type="Proteomes" id="UP000006548">
    <property type="component" value="Chromosome 1"/>
</dbReference>
<dbReference type="ExpressionAtlas" id="C0LGI5">
    <property type="expression patterns" value="baseline and differential"/>
</dbReference>
<dbReference type="GO" id="GO:0016020">
    <property type="term" value="C:membrane"/>
    <property type="evidence" value="ECO:0007669"/>
    <property type="project" value="UniProtKB-SubCell"/>
</dbReference>
<dbReference type="GO" id="GO:0005524">
    <property type="term" value="F:ATP binding"/>
    <property type="evidence" value="ECO:0007669"/>
    <property type="project" value="UniProtKB-KW"/>
</dbReference>
<dbReference type="GO" id="GO:0042802">
    <property type="term" value="F:identical protein binding"/>
    <property type="evidence" value="ECO:0000353"/>
    <property type="project" value="IntAct"/>
</dbReference>
<dbReference type="GO" id="GO:0106310">
    <property type="term" value="F:protein serine kinase activity"/>
    <property type="evidence" value="ECO:0007669"/>
    <property type="project" value="RHEA"/>
</dbReference>
<dbReference type="GO" id="GO:0004674">
    <property type="term" value="F:protein serine/threonine kinase activity"/>
    <property type="evidence" value="ECO:0007669"/>
    <property type="project" value="UniProtKB-KW"/>
</dbReference>
<dbReference type="FunFam" id="1.10.510.10:FF:000609">
    <property type="entry name" value="Inactive LRR receptor-like serine/threonine-protein kinase BIR2"/>
    <property type="match status" value="1"/>
</dbReference>
<dbReference type="FunFam" id="3.30.200.20:FF:000428">
    <property type="entry name" value="Inactive LRR receptor-like serine/threonine-protein kinase BIR2"/>
    <property type="match status" value="1"/>
</dbReference>
<dbReference type="FunFam" id="3.80.10.10:FF:000415">
    <property type="entry name" value="Inactive LRR receptor-like serine/threonine-protein kinase BIR2"/>
    <property type="match status" value="1"/>
</dbReference>
<dbReference type="Gene3D" id="3.30.200.20">
    <property type="entry name" value="Phosphorylase Kinase, domain 1"/>
    <property type="match status" value="1"/>
</dbReference>
<dbReference type="Gene3D" id="3.80.10.10">
    <property type="entry name" value="Ribonuclease Inhibitor"/>
    <property type="match status" value="1"/>
</dbReference>
<dbReference type="Gene3D" id="1.10.510.10">
    <property type="entry name" value="Transferase(Phosphotransferase) domain 1"/>
    <property type="match status" value="1"/>
</dbReference>
<dbReference type="InterPro" id="IPR011009">
    <property type="entry name" value="Kinase-like_dom_sf"/>
</dbReference>
<dbReference type="InterPro" id="IPR001611">
    <property type="entry name" value="Leu-rich_rpt"/>
</dbReference>
<dbReference type="InterPro" id="IPR032675">
    <property type="entry name" value="LRR_dom_sf"/>
</dbReference>
<dbReference type="InterPro" id="IPR013210">
    <property type="entry name" value="LRR_N_plant-typ"/>
</dbReference>
<dbReference type="InterPro" id="IPR046959">
    <property type="entry name" value="PRK1-6/SRF4-like"/>
</dbReference>
<dbReference type="InterPro" id="IPR000719">
    <property type="entry name" value="Prot_kinase_dom"/>
</dbReference>
<dbReference type="InterPro" id="IPR001245">
    <property type="entry name" value="Ser-Thr/Tyr_kinase_cat_dom"/>
</dbReference>
<dbReference type="PANTHER" id="PTHR48007:SF86">
    <property type="entry name" value="(WILD MALAYSIAN BANANA) HYPOTHETICAL PROTEIN"/>
    <property type="match status" value="1"/>
</dbReference>
<dbReference type="PANTHER" id="PTHR48007">
    <property type="entry name" value="LEUCINE-RICH REPEAT RECEPTOR-LIKE PROTEIN KINASE PXC1"/>
    <property type="match status" value="1"/>
</dbReference>
<dbReference type="Pfam" id="PF00560">
    <property type="entry name" value="LRR_1"/>
    <property type="match status" value="1"/>
</dbReference>
<dbReference type="Pfam" id="PF13855">
    <property type="entry name" value="LRR_8"/>
    <property type="match status" value="1"/>
</dbReference>
<dbReference type="Pfam" id="PF08263">
    <property type="entry name" value="LRRNT_2"/>
    <property type="match status" value="1"/>
</dbReference>
<dbReference type="Pfam" id="PF07714">
    <property type="entry name" value="PK_Tyr_Ser-Thr"/>
    <property type="match status" value="1"/>
</dbReference>
<dbReference type="PRINTS" id="PR00019">
    <property type="entry name" value="LEURICHRPT"/>
</dbReference>
<dbReference type="SUPFAM" id="SSF52058">
    <property type="entry name" value="L domain-like"/>
    <property type="match status" value="1"/>
</dbReference>
<dbReference type="SUPFAM" id="SSF56112">
    <property type="entry name" value="Protein kinase-like (PK-like)"/>
    <property type="match status" value="1"/>
</dbReference>
<dbReference type="PROSITE" id="PS50011">
    <property type="entry name" value="PROTEIN_KINASE_DOM"/>
    <property type="match status" value="1"/>
</dbReference>